<evidence type="ECO:0000255" key="1">
    <source>
        <dbReference type="HAMAP-Rule" id="MF_00564"/>
    </source>
</evidence>
<proteinExistence type="inferred from homology"/>
<organism>
    <name type="scientific">Geobacillus sp. (strain WCH70)</name>
    <dbReference type="NCBI Taxonomy" id="471223"/>
    <lineage>
        <taxon>Bacteria</taxon>
        <taxon>Bacillati</taxon>
        <taxon>Bacillota</taxon>
        <taxon>Bacilli</taxon>
        <taxon>Bacillales</taxon>
        <taxon>Anoxybacillaceae</taxon>
        <taxon>Geobacillus</taxon>
    </lineage>
</organism>
<gene>
    <name evidence="1" type="primary">rph</name>
    <name type="ordered locus">GWCH70_2600</name>
</gene>
<feature type="chain" id="PRO_1000212063" description="Ribonuclease PH">
    <location>
        <begin position="1"/>
        <end position="255"/>
    </location>
</feature>
<feature type="binding site" evidence="1">
    <location>
        <position position="86"/>
    </location>
    <ligand>
        <name>phosphate</name>
        <dbReference type="ChEBI" id="CHEBI:43474"/>
        <note>substrate</note>
    </ligand>
</feature>
<feature type="binding site" evidence="1">
    <location>
        <begin position="124"/>
        <end position="126"/>
    </location>
    <ligand>
        <name>phosphate</name>
        <dbReference type="ChEBI" id="CHEBI:43474"/>
        <note>substrate</note>
    </ligand>
</feature>
<protein>
    <recommendedName>
        <fullName evidence="1">Ribonuclease PH</fullName>
        <shortName evidence="1">RNase PH</shortName>
        <ecNumber evidence="1">2.7.7.56</ecNumber>
    </recommendedName>
    <alternativeName>
        <fullName evidence="1">tRNA nucleotidyltransferase</fullName>
    </alternativeName>
</protein>
<accession>C5D5M7</accession>
<sequence length="255" mass="28192">MRIDGRENKQLRPVHMEKHFIKHAEGSVFITVGDTKVICTASIDDKVPPFMRGGGKGWITAEYAMLPRATEQRNVRESSKGKLSGRTMEIQRLIGRALRSVVNLDKLGEKTVWIDCDVIQADGGTRTASITGAYVAMVLAFAKLMEEKKLDELPVNDFLAATSVGIDPEHGIILDLNYAEDARAEVDMNIVMTGAGRFVEIQGTGEEATFSREQLNELLDTAEVGIRQLIDIQRKTLGELAMQIDIKRSEESGDT</sequence>
<name>RNPH_GEOSW</name>
<dbReference type="EC" id="2.7.7.56" evidence="1"/>
<dbReference type="EMBL" id="CP001638">
    <property type="protein sequence ID" value="ACS25295.1"/>
    <property type="molecule type" value="Genomic_DNA"/>
</dbReference>
<dbReference type="SMR" id="C5D5M7"/>
<dbReference type="STRING" id="471223.GWCH70_2600"/>
<dbReference type="KEGG" id="gwc:GWCH70_2600"/>
<dbReference type="eggNOG" id="COG0689">
    <property type="taxonomic scope" value="Bacteria"/>
</dbReference>
<dbReference type="HOGENOM" id="CLU_050858_0_0_9"/>
<dbReference type="OrthoDB" id="9802265at2"/>
<dbReference type="GO" id="GO:0000175">
    <property type="term" value="F:3'-5'-RNA exonuclease activity"/>
    <property type="evidence" value="ECO:0007669"/>
    <property type="project" value="UniProtKB-UniRule"/>
</dbReference>
<dbReference type="GO" id="GO:0000049">
    <property type="term" value="F:tRNA binding"/>
    <property type="evidence" value="ECO:0007669"/>
    <property type="project" value="UniProtKB-UniRule"/>
</dbReference>
<dbReference type="GO" id="GO:0009022">
    <property type="term" value="F:tRNA nucleotidyltransferase activity"/>
    <property type="evidence" value="ECO:0007669"/>
    <property type="project" value="UniProtKB-UniRule"/>
</dbReference>
<dbReference type="GO" id="GO:0016075">
    <property type="term" value="P:rRNA catabolic process"/>
    <property type="evidence" value="ECO:0007669"/>
    <property type="project" value="UniProtKB-UniRule"/>
</dbReference>
<dbReference type="GO" id="GO:0006364">
    <property type="term" value="P:rRNA processing"/>
    <property type="evidence" value="ECO:0007669"/>
    <property type="project" value="UniProtKB-KW"/>
</dbReference>
<dbReference type="GO" id="GO:0008033">
    <property type="term" value="P:tRNA processing"/>
    <property type="evidence" value="ECO:0007669"/>
    <property type="project" value="UniProtKB-UniRule"/>
</dbReference>
<dbReference type="CDD" id="cd11362">
    <property type="entry name" value="RNase_PH_bact"/>
    <property type="match status" value="1"/>
</dbReference>
<dbReference type="FunFam" id="3.30.230.70:FF:000003">
    <property type="entry name" value="Ribonuclease PH"/>
    <property type="match status" value="1"/>
</dbReference>
<dbReference type="Gene3D" id="3.30.230.70">
    <property type="entry name" value="GHMP Kinase, N-terminal domain"/>
    <property type="match status" value="1"/>
</dbReference>
<dbReference type="HAMAP" id="MF_00564">
    <property type="entry name" value="RNase_PH"/>
    <property type="match status" value="1"/>
</dbReference>
<dbReference type="InterPro" id="IPR001247">
    <property type="entry name" value="ExoRNase_PH_dom1"/>
</dbReference>
<dbReference type="InterPro" id="IPR015847">
    <property type="entry name" value="ExoRNase_PH_dom2"/>
</dbReference>
<dbReference type="InterPro" id="IPR036345">
    <property type="entry name" value="ExoRNase_PH_dom2_sf"/>
</dbReference>
<dbReference type="InterPro" id="IPR027408">
    <property type="entry name" value="PNPase/RNase_PH_dom_sf"/>
</dbReference>
<dbReference type="InterPro" id="IPR020568">
    <property type="entry name" value="Ribosomal_Su5_D2-typ_SF"/>
</dbReference>
<dbReference type="InterPro" id="IPR050080">
    <property type="entry name" value="RNase_PH"/>
</dbReference>
<dbReference type="InterPro" id="IPR002381">
    <property type="entry name" value="RNase_PH_bac-type"/>
</dbReference>
<dbReference type="InterPro" id="IPR018336">
    <property type="entry name" value="RNase_PH_CS"/>
</dbReference>
<dbReference type="NCBIfam" id="TIGR01966">
    <property type="entry name" value="RNasePH"/>
    <property type="match status" value="1"/>
</dbReference>
<dbReference type="PANTHER" id="PTHR11953">
    <property type="entry name" value="EXOSOME COMPLEX COMPONENT"/>
    <property type="match status" value="1"/>
</dbReference>
<dbReference type="PANTHER" id="PTHR11953:SF0">
    <property type="entry name" value="EXOSOME COMPLEX COMPONENT RRP41"/>
    <property type="match status" value="1"/>
</dbReference>
<dbReference type="Pfam" id="PF01138">
    <property type="entry name" value="RNase_PH"/>
    <property type="match status" value="1"/>
</dbReference>
<dbReference type="Pfam" id="PF03725">
    <property type="entry name" value="RNase_PH_C"/>
    <property type="match status" value="1"/>
</dbReference>
<dbReference type="SUPFAM" id="SSF55666">
    <property type="entry name" value="Ribonuclease PH domain 2-like"/>
    <property type="match status" value="1"/>
</dbReference>
<dbReference type="SUPFAM" id="SSF54211">
    <property type="entry name" value="Ribosomal protein S5 domain 2-like"/>
    <property type="match status" value="1"/>
</dbReference>
<dbReference type="PROSITE" id="PS01277">
    <property type="entry name" value="RIBONUCLEASE_PH"/>
    <property type="match status" value="1"/>
</dbReference>
<reference key="1">
    <citation type="submission" date="2009-06" db="EMBL/GenBank/DDBJ databases">
        <title>Complete sequence of chromosome of Geopacillus sp. WCH70.</title>
        <authorList>
            <consortium name="US DOE Joint Genome Institute"/>
            <person name="Lucas S."/>
            <person name="Copeland A."/>
            <person name="Lapidus A."/>
            <person name="Glavina del Rio T."/>
            <person name="Dalin E."/>
            <person name="Tice H."/>
            <person name="Bruce D."/>
            <person name="Goodwin L."/>
            <person name="Pitluck S."/>
            <person name="Chertkov O."/>
            <person name="Brettin T."/>
            <person name="Detter J.C."/>
            <person name="Han C."/>
            <person name="Larimer F."/>
            <person name="Land M."/>
            <person name="Hauser L."/>
            <person name="Kyrpides N."/>
            <person name="Mikhailova N."/>
            <person name="Brumm P."/>
            <person name="Mead D.A."/>
            <person name="Richardson P."/>
        </authorList>
    </citation>
    <scope>NUCLEOTIDE SEQUENCE [LARGE SCALE GENOMIC DNA]</scope>
    <source>
        <strain>WCH70</strain>
    </source>
</reference>
<keyword id="KW-0548">Nucleotidyltransferase</keyword>
<keyword id="KW-0694">RNA-binding</keyword>
<keyword id="KW-0698">rRNA processing</keyword>
<keyword id="KW-0808">Transferase</keyword>
<keyword id="KW-0819">tRNA processing</keyword>
<keyword id="KW-0820">tRNA-binding</keyword>
<comment type="function">
    <text evidence="1">Phosphorolytic 3'-5' exoribonuclease that plays an important role in tRNA 3'-end maturation. Removes nucleotide residues following the 3'-CCA terminus of tRNAs; can also add nucleotides to the ends of RNA molecules by using nucleoside diphosphates as substrates, but this may not be physiologically important. Probably plays a role in initiation of 16S rRNA degradation (leading to ribosome degradation) during starvation.</text>
</comment>
<comment type="catalytic activity">
    <reaction evidence="1">
        <text>tRNA(n+1) + phosphate = tRNA(n) + a ribonucleoside 5'-diphosphate</text>
        <dbReference type="Rhea" id="RHEA:10628"/>
        <dbReference type="Rhea" id="RHEA-COMP:17343"/>
        <dbReference type="Rhea" id="RHEA-COMP:17344"/>
        <dbReference type="ChEBI" id="CHEBI:43474"/>
        <dbReference type="ChEBI" id="CHEBI:57930"/>
        <dbReference type="ChEBI" id="CHEBI:173114"/>
        <dbReference type="EC" id="2.7.7.56"/>
    </reaction>
</comment>
<comment type="subunit">
    <text evidence="1">Homohexameric ring arranged as a trimer of dimers.</text>
</comment>
<comment type="similarity">
    <text evidence="1">Belongs to the RNase PH family.</text>
</comment>